<accession>B1JIW1</accession>
<gene>
    <name evidence="1" type="primary">rplC</name>
    <name type="ordered locus">YPK_0283</name>
</gene>
<keyword id="KW-0488">Methylation</keyword>
<keyword id="KW-0687">Ribonucleoprotein</keyword>
<keyword id="KW-0689">Ribosomal protein</keyword>
<keyword id="KW-0694">RNA-binding</keyword>
<keyword id="KW-0699">rRNA-binding</keyword>
<feature type="chain" id="PRO_1000141947" description="Large ribosomal subunit protein uL3">
    <location>
        <begin position="1"/>
        <end position="209"/>
    </location>
</feature>
<feature type="region of interest" description="Disordered" evidence="2">
    <location>
        <begin position="133"/>
        <end position="152"/>
    </location>
</feature>
<feature type="modified residue" description="N5-methylglutamine" evidence="1">
    <location>
        <position position="150"/>
    </location>
</feature>
<evidence type="ECO:0000255" key="1">
    <source>
        <dbReference type="HAMAP-Rule" id="MF_01325"/>
    </source>
</evidence>
<evidence type="ECO:0000256" key="2">
    <source>
        <dbReference type="SAM" id="MobiDB-lite"/>
    </source>
</evidence>
<evidence type="ECO:0000305" key="3"/>
<reference key="1">
    <citation type="submission" date="2008-02" db="EMBL/GenBank/DDBJ databases">
        <title>Complete sequence of Yersinia pseudotuberculosis YPIII.</title>
        <authorList>
            <consortium name="US DOE Joint Genome Institute"/>
            <person name="Copeland A."/>
            <person name="Lucas S."/>
            <person name="Lapidus A."/>
            <person name="Glavina del Rio T."/>
            <person name="Dalin E."/>
            <person name="Tice H."/>
            <person name="Bruce D."/>
            <person name="Goodwin L."/>
            <person name="Pitluck S."/>
            <person name="Munk A.C."/>
            <person name="Brettin T."/>
            <person name="Detter J.C."/>
            <person name="Han C."/>
            <person name="Tapia R."/>
            <person name="Schmutz J."/>
            <person name="Larimer F."/>
            <person name="Land M."/>
            <person name="Hauser L."/>
            <person name="Challacombe J.F."/>
            <person name="Green L."/>
            <person name="Lindler L.E."/>
            <person name="Nikolich M.P."/>
            <person name="Richardson P."/>
        </authorList>
    </citation>
    <scope>NUCLEOTIDE SEQUENCE [LARGE SCALE GENOMIC DNA]</scope>
    <source>
        <strain>YPIII</strain>
    </source>
</reference>
<organism>
    <name type="scientific">Yersinia pseudotuberculosis serotype O:3 (strain YPIII)</name>
    <dbReference type="NCBI Taxonomy" id="502800"/>
    <lineage>
        <taxon>Bacteria</taxon>
        <taxon>Pseudomonadati</taxon>
        <taxon>Pseudomonadota</taxon>
        <taxon>Gammaproteobacteria</taxon>
        <taxon>Enterobacterales</taxon>
        <taxon>Yersiniaceae</taxon>
        <taxon>Yersinia</taxon>
    </lineage>
</organism>
<protein>
    <recommendedName>
        <fullName evidence="1">Large ribosomal subunit protein uL3</fullName>
    </recommendedName>
    <alternativeName>
        <fullName evidence="3">50S ribosomal protein L3</fullName>
    </alternativeName>
</protein>
<name>RL3_YERPY</name>
<comment type="function">
    <text evidence="1">One of the primary rRNA binding proteins, it binds directly near the 3'-end of the 23S rRNA, where it nucleates assembly of the 50S subunit.</text>
</comment>
<comment type="subunit">
    <text evidence="1">Part of the 50S ribosomal subunit. Forms a cluster with proteins L14 and L19.</text>
</comment>
<comment type="PTM">
    <text evidence="1">Methylated by PrmB.</text>
</comment>
<comment type="similarity">
    <text evidence="1">Belongs to the universal ribosomal protein uL3 family.</text>
</comment>
<sequence>MIGLVGKKVGMTRIFTEDGVSIPVTVIEIEANRVTQVKSLENDGYRAVQVTTGAKKANRVTKPEAGHFAKAGVEAGRGLWEFRLPEGQEFTAGQEISVEIFADVKKVDVTGTSKGKGFAGTVKRWNFRTQDATHGNSLSHRVPGSIGQNQTPGKVFKGKKMAGHMGDERVTVQSLDVVRVDAERNLLLVKGAVPGATGGNLIVKPAVKA</sequence>
<proteinExistence type="inferred from homology"/>
<dbReference type="EMBL" id="CP000950">
    <property type="protein sequence ID" value="ACA66596.1"/>
    <property type="molecule type" value="Genomic_DNA"/>
</dbReference>
<dbReference type="RefSeq" id="WP_002218932.1">
    <property type="nucleotide sequence ID" value="NZ_CP009792.1"/>
</dbReference>
<dbReference type="SMR" id="B1JIW1"/>
<dbReference type="GeneID" id="96663196"/>
<dbReference type="KEGG" id="ypy:YPK_0283"/>
<dbReference type="PATRIC" id="fig|502800.11.peg.890"/>
<dbReference type="GO" id="GO:0022625">
    <property type="term" value="C:cytosolic large ribosomal subunit"/>
    <property type="evidence" value="ECO:0007669"/>
    <property type="project" value="TreeGrafter"/>
</dbReference>
<dbReference type="GO" id="GO:0019843">
    <property type="term" value="F:rRNA binding"/>
    <property type="evidence" value="ECO:0007669"/>
    <property type="project" value="UniProtKB-UniRule"/>
</dbReference>
<dbReference type="GO" id="GO:0003735">
    <property type="term" value="F:structural constituent of ribosome"/>
    <property type="evidence" value="ECO:0007669"/>
    <property type="project" value="InterPro"/>
</dbReference>
<dbReference type="GO" id="GO:0006412">
    <property type="term" value="P:translation"/>
    <property type="evidence" value="ECO:0007669"/>
    <property type="project" value="UniProtKB-UniRule"/>
</dbReference>
<dbReference type="FunFam" id="2.40.30.10:FF:000004">
    <property type="entry name" value="50S ribosomal protein L3"/>
    <property type="match status" value="1"/>
</dbReference>
<dbReference type="FunFam" id="3.30.160.810:FF:000001">
    <property type="entry name" value="50S ribosomal protein L3"/>
    <property type="match status" value="1"/>
</dbReference>
<dbReference type="Gene3D" id="3.30.160.810">
    <property type="match status" value="1"/>
</dbReference>
<dbReference type="Gene3D" id="2.40.30.10">
    <property type="entry name" value="Translation factors"/>
    <property type="match status" value="1"/>
</dbReference>
<dbReference type="HAMAP" id="MF_01325_B">
    <property type="entry name" value="Ribosomal_uL3_B"/>
    <property type="match status" value="1"/>
</dbReference>
<dbReference type="InterPro" id="IPR000597">
    <property type="entry name" value="Ribosomal_uL3"/>
</dbReference>
<dbReference type="InterPro" id="IPR019927">
    <property type="entry name" value="Ribosomal_uL3_bac/org-type"/>
</dbReference>
<dbReference type="InterPro" id="IPR019926">
    <property type="entry name" value="Ribosomal_uL3_CS"/>
</dbReference>
<dbReference type="InterPro" id="IPR009000">
    <property type="entry name" value="Transl_B-barrel_sf"/>
</dbReference>
<dbReference type="NCBIfam" id="TIGR03625">
    <property type="entry name" value="L3_bact"/>
    <property type="match status" value="1"/>
</dbReference>
<dbReference type="PANTHER" id="PTHR11229">
    <property type="entry name" value="50S RIBOSOMAL PROTEIN L3"/>
    <property type="match status" value="1"/>
</dbReference>
<dbReference type="PANTHER" id="PTHR11229:SF16">
    <property type="entry name" value="LARGE RIBOSOMAL SUBUNIT PROTEIN UL3C"/>
    <property type="match status" value="1"/>
</dbReference>
<dbReference type="Pfam" id="PF00297">
    <property type="entry name" value="Ribosomal_L3"/>
    <property type="match status" value="1"/>
</dbReference>
<dbReference type="SUPFAM" id="SSF50447">
    <property type="entry name" value="Translation proteins"/>
    <property type="match status" value="1"/>
</dbReference>
<dbReference type="PROSITE" id="PS00474">
    <property type="entry name" value="RIBOSOMAL_L3"/>
    <property type="match status" value="1"/>
</dbReference>